<comment type="function">
    <text evidence="5">Catalyzes the formation of S-adenosylmethionine from methionine and ATP. The reaction comprises two steps that are both catalyzed by the same enzyme: formation of S-adenosylmethionine (AdoMet) and triphosphate, and subsequent hydrolysis of the triphosphate.</text>
</comment>
<comment type="catalytic activity">
    <reaction evidence="5">
        <text>L-methionine + ATP + H2O = S-adenosyl-L-methionine + phosphate + diphosphate</text>
        <dbReference type="Rhea" id="RHEA:21080"/>
        <dbReference type="ChEBI" id="CHEBI:15377"/>
        <dbReference type="ChEBI" id="CHEBI:30616"/>
        <dbReference type="ChEBI" id="CHEBI:33019"/>
        <dbReference type="ChEBI" id="CHEBI:43474"/>
        <dbReference type="ChEBI" id="CHEBI:57844"/>
        <dbReference type="ChEBI" id="CHEBI:59789"/>
        <dbReference type="EC" id="2.5.1.6"/>
    </reaction>
</comment>
<comment type="cofactor">
    <cofactor evidence="5">
        <name>Mn(2+)</name>
        <dbReference type="ChEBI" id="CHEBI:29035"/>
    </cofactor>
    <cofactor evidence="5">
        <name>Mg(2+)</name>
        <dbReference type="ChEBI" id="CHEBI:18420"/>
    </cofactor>
    <cofactor evidence="5">
        <name>Co(2+)</name>
        <dbReference type="ChEBI" id="CHEBI:48828"/>
    </cofactor>
    <text evidence="3 5">Binds 2 divalent ions per subunit. The metal ions interact primarily with the substrate (By similarity). Can utilize magnesium, manganese or cobalt (in vitro) (By similarity).</text>
</comment>
<comment type="cofactor">
    <cofactor evidence="5">
        <name>K(+)</name>
        <dbReference type="ChEBI" id="CHEBI:29103"/>
    </cofactor>
    <text evidence="3">Binds 1 potassium ion per subunit. The potassium ion interacts primarily with the substrate (By similarity).</text>
</comment>
<comment type="pathway">
    <text evidence="5">Amino-acid biosynthesis; S-adenosyl-L-methionine biosynthesis; S-adenosyl-L-methionine from L-methionine: step 1/1.</text>
</comment>
<comment type="subunit">
    <text evidence="1">Homotetramer.</text>
</comment>
<comment type="subcellular location">
    <subcellularLocation>
        <location evidence="1">Cytoplasm</location>
    </subcellularLocation>
</comment>
<comment type="similarity">
    <text evidence="6">Belongs to the AdoMet synthase family.</text>
</comment>
<keyword id="KW-0067">ATP-binding</keyword>
<keyword id="KW-0170">Cobalt</keyword>
<keyword id="KW-0963">Cytoplasm</keyword>
<keyword id="KW-0460">Magnesium</keyword>
<keyword id="KW-0479">Metal-binding</keyword>
<keyword id="KW-0547">Nucleotide-binding</keyword>
<keyword id="KW-0554">One-carbon metabolism</keyword>
<keyword id="KW-0630">Potassium</keyword>
<keyword id="KW-1185">Reference proteome</keyword>
<keyword id="KW-0808">Transferase</keyword>
<name>METK5_POPTR</name>
<accession>A9PHE9</accession>
<gene>
    <name type="primary">METK5</name>
</gene>
<organism>
    <name type="scientific">Populus trichocarpa</name>
    <name type="common">Western balsam poplar</name>
    <name type="synonym">Populus balsamifera subsp. trichocarpa</name>
    <dbReference type="NCBI Taxonomy" id="3694"/>
    <lineage>
        <taxon>Eukaryota</taxon>
        <taxon>Viridiplantae</taxon>
        <taxon>Streptophyta</taxon>
        <taxon>Embryophyta</taxon>
        <taxon>Tracheophyta</taxon>
        <taxon>Spermatophyta</taxon>
        <taxon>Magnoliopsida</taxon>
        <taxon>eudicotyledons</taxon>
        <taxon>Gunneridae</taxon>
        <taxon>Pentapetalae</taxon>
        <taxon>rosids</taxon>
        <taxon>fabids</taxon>
        <taxon>Malpighiales</taxon>
        <taxon>Salicaceae</taxon>
        <taxon>Saliceae</taxon>
        <taxon>Populus</taxon>
    </lineage>
</organism>
<protein>
    <recommendedName>
        <fullName>S-adenosylmethionine synthase 5</fullName>
        <shortName>AdoMet synthase 5</shortName>
        <ecNumber evidence="5">2.5.1.6</ecNumber>
    </recommendedName>
    <alternativeName>
        <fullName>Methionine adenosyltransferase 5</fullName>
        <shortName>MAT 5</shortName>
    </alternativeName>
</protein>
<dbReference type="EC" id="2.5.1.6" evidence="5"/>
<dbReference type="EMBL" id="CM009297">
    <property type="status" value="NOT_ANNOTATED_CDS"/>
    <property type="molecule type" value="Genomic_DNA"/>
</dbReference>
<dbReference type="EMBL" id="EF147800">
    <property type="protein sequence ID" value="ABK95802.1"/>
    <property type="molecule type" value="mRNA"/>
</dbReference>
<dbReference type="SMR" id="A9PHE9"/>
<dbReference type="STRING" id="3694.A9PHE9"/>
<dbReference type="InParanoid" id="A9PHE9"/>
<dbReference type="UniPathway" id="UPA00315">
    <property type="reaction ID" value="UER00080"/>
</dbReference>
<dbReference type="Proteomes" id="UP000006729">
    <property type="component" value="Chromosome 8"/>
</dbReference>
<dbReference type="ExpressionAtlas" id="A9PHE9">
    <property type="expression patterns" value="differential"/>
</dbReference>
<dbReference type="GO" id="GO:0005829">
    <property type="term" value="C:cytosol"/>
    <property type="evidence" value="ECO:0000318"/>
    <property type="project" value="GO_Central"/>
</dbReference>
<dbReference type="GO" id="GO:0005524">
    <property type="term" value="F:ATP binding"/>
    <property type="evidence" value="ECO:0007669"/>
    <property type="project" value="UniProtKB-KW"/>
</dbReference>
<dbReference type="GO" id="GO:0046872">
    <property type="term" value="F:metal ion binding"/>
    <property type="evidence" value="ECO:0007669"/>
    <property type="project" value="UniProtKB-KW"/>
</dbReference>
<dbReference type="GO" id="GO:0004478">
    <property type="term" value="F:methionine adenosyltransferase activity"/>
    <property type="evidence" value="ECO:0000318"/>
    <property type="project" value="GO_Central"/>
</dbReference>
<dbReference type="GO" id="GO:0006730">
    <property type="term" value="P:one-carbon metabolic process"/>
    <property type="evidence" value="ECO:0007669"/>
    <property type="project" value="UniProtKB-KW"/>
</dbReference>
<dbReference type="GO" id="GO:0006556">
    <property type="term" value="P:S-adenosylmethionine biosynthetic process"/>
    <property type="evidence" value="ECO:0000318"/>
    <property type="project" value="GO_Central"/>
</dbReference>
<dbReference type="CDD" id="cd18079">
    <property type="entry name" value="S-AdoMet_synt"/>
    <property type="match status" value="1"/>
</dbReference>
<dbReference type="FunFam" id="3.30.300.10:FF:000001">
    <property type="entry name" value="S-adenosylmethionine synthase"/>
    <property type="match status" value="1"/>
</dbReference>
<dbReference type="FunFam" id="3.30.300.10:FF:000003">
    <property type="entry name" value="S-adenosylmethionine synthase"/>
    <property type="match status" value="1"/>
</dbReference>
<dbReference type="FunFam" id="3.30.300.10:FF:000004">
    <property type="entry name" value="S-adenosylmethionine synthase"/>
    <property type="match status" value="1"/>
</dbReference>
<dbReference type="Gene3D" id="3.30.300.10">
    <property type="match status" value="3"/>
</dbReference>
<dbReference type="HAMAP" id="MF_00086">
    <property type="entry name" value="S_AdoMet_synth1"/>
    <property type="match status" value="1"/>
</dbReference>
<dbReference type="InterPro" id="IPR022631">
    <property type="entry name" value="ADOMET_SYNTHASE_CS"/>
</dbReference>
<dbReference type="InterPro" id="IPR022630">
    <property type="entry name" value="S-AdoMet_synt_C"/>
</dbReference>
<dbReference type="InterPro" id="IPR022629">
    <property type="entry name" value="S-AdoMet_synt_central"/>
</dbReference>
<dbReference type="InterPro" id="IPR022628">
    <property type="entry name" value="S-AdoMet_synt_N"/>
</dbReference>
<dbReference type="InterPro" id="IPR002133">
    <property type="entry name" value="S-AdoMet_synthetase"/>
</dbReference>
<dbReference type="InterPro" id="IPR022636">
    <property type="entry name" value="S-AdoMet_synthetase_sfam"/>
</dbReference>
<dbReference type="NCBIfam" id="TIGR01034">
    <property type="entry name" value="metK"/>
    <property type="match status" value="1"/>
</dbReference>
<dbReference type="PANTHER" id="PTHR11964">
    <property type="entry name" value="S-ADENOSYLMETHIONINE SYNTHETASE"/>
    <property type="match status" value="1"/>
</dbReference>
<dbReference type="Pfam" id="PF02773">
    <property type="entry name" value="S-AdoMet_synt_C"/>
    <property type="match status" value="1"/>
</dbReference>
<dbReference type="Pfam" id="PF02772">
    <property type="entry name" value="S-AdoMet_synt_M"/>
    <property type="match status" value="1"/>
</dbReference>
<dbReference type="Pfam" id="PF00438">
    <property type="entry name" value="S-AdoMet_synt_N"/>
    <property type="match status" value="1"/>
</dbReference>
<dbReference type="PIRSF" id="PIRSF000497">
    <property type="entry name" value="MAT"/>
    <property type="match status" value="1"/>
</dbReference>
<dbReference type="SUPFAM" id="SSF55973">
    <property type="entry name" value="S-adenosylmethionine synthetase"/>
    <property type="match status" value="3"/>
</dbReference>
<dbReference type="PROSITE" id="PS00376">
    <property type="entry name" value="ADOMET_SYNTHASE_1"/>
    <property type="match status" value="1"/>
</dbReference>
<dbReference type="PROSITE" id="PS00377">
    <property type="entry name" value="ADOMET_SYNTHASE_2"/>
    <property type="match status" value="1"/>
</dbReference>
<reference key="1">
    <citation type="journal article" date="2006" name="Science">
        <title>The genome of black cottonwood, Populus trichocarpa (Torr. &amp; Gray).</title>
        <authorList>
            <person name="Tuskan G.A."/>
            <person name="Difazio S."/>
            <person name="Jansson S."/>
            <person name="Bohlmann J."/>
            <person name="Grigoriev I."/>
            <person name="Hellsten U."/>
            <person name="Putnam N."/>
            <person name="Ralph S."/>
            <person name="Rombauts S."/>
            <person name="Salamov A."/>
            <person name="Schein J."/>
            <person name="Sterck L."/>
            <person name="Aerts A."/>
            <person name="Bhalerao R.R."/>
            <person name="Bhalerao R.P."/>
            <person name="Blaudez D."/>
            <person name="Boerjan W."/>
            <person name="Brun A."/>
            <person name="Brunner A."/>
            <person name="Busov V."/>
            <person name="Campbell M."/>
            <person name="Carlson J."/>
            <person name="Chalot M."/>
            <person name="Chapman J."/>
            <person name="Chen G.-L."/>
            <person name="Cooper D."/>
            <person name="Coutinho P.M."/>
            <person name="Couturier J."/>
            <person name="Covert S."/>
            <person name="Cronk Q."/>
            <person name="Cunningham R."/>
            <person name="Davis J."/>
            <person name="Degroeve S."/>
            <person name="Dejardin A."/>
            <person name="dePamphilis C.W."/>
            <person name="Detter J."/>
            <person name="Dirks B."/>
            <person name="Dubchak I."/>
            <person name="Duplessis S."/>
            <person name="Ehlting J."/>
            <person name="Ellis B."/>
            <person name="Gendler K."/>
            <person name="Goodstein D."/>
            <person name="Gribskov M."/>
            <person name="Grimwood J."/>
            <person name="Groover A."/>
            <person name="Gunter L."/>
            <person name="Hamberger B."/>
            <person name="Heinze B."/>
            <person name="Helariutta Y."/>
            <person name="Henrissat B."/>
            <person name="Holligan D."/>
            <person name="Holt R."/>
            <person name="Huang W."/>
            <person name="Islam-Faridi N."/>
            <person name="Jones S."/>
            <person name="Jones-Rhoades M."/>
            <person name="Jorgensen R."/>
            <person name="Joshi C."/>
            <person name="Kangasjaervi J."/>
            <person name="Karlsson J."/>
            <person name="Kelleher C."/>
            <person name="Kirkpatrick R."/>
            <person name="Kirst M."/>
            <person name="Kohler A."/>
            <person name="Kalluri U."/>
            <person name="Larimer F."/>
            <person name="Leebens-Mack J."/>
            <person name="Leple J.-C."/>
            <person name="Locascio P."/>
            <person name="Lou Y."/>
            <person name="Lucas S."/>
            <person name="Martin F."/>
            <person name="Montanini B."/>
            <person name="Napoli C."/>
            <person name="Nelson D.R."/>
            <person name="Nelson C."/>
            <person name="Nieminen K."/>
            <person name="Nilsson O."/>
            <person name="Pereda V."/>
            <person name="Peter G."/>
            <person name="Philippe R."/>
            <person name="Pilate G."/>
            <person name="Poliakov A."/>
            <person name="Razumovskaya J."/>
            <person name="Richardson P."/>
            <person name="Rinaldi C."/>
            <person name="Ritland K."/>
            <person name="Rouze P."/>
            <person name="Ryaboy D."/>
            <person name="Schmutz J."/>
            <person name="Schrader J."/>
            <person name="Segerman B."/>
            <person name="Shin H."/>
            <person name="Siddiqui A."/>
            <person name="Sterky F."/>
            <person name="Terry A."/>
            <person name="Tsai C.-J."/>
            <person name="Uberbacher E."/>
            <person name="Unneberg P."/>
            <person name="Vahala J."/>
            <person name="Wall K."/>
            <person name="Wessler S."/>
            <person name="Yang G."/>
            <person name="Yin T."/>
            <person name="Douglas C."/>
            <person name="Marra M."/>
            <person name="Sandberg G."/>
            <person name="Van de Peer Y."/>
            <person name="Rokhsar D.S."/>
        </authorList>
    </citation>
    <scope>NUCLEOTIDE SEQUENCE [LARGE SCALE GENOMIC DNA]</scope>
    <source>
        <strain>cv. Nisqually</strain>
    </source>
</reference>
<reference key="2">
    <citation type="submission" date="2006-11" db="EMBL/GenBank/DDBJ databases">
        <title>The poplar transcriptome: Analysis of ca. 4,700 sequence-verified full-length cDNAs.</title>
        <authorList>
            <person name="Ralph S.G."/>
            <person name="Chun H.J.E."/>
            <person name="Cooper D."/>
            <person name="Kirkpatrick R."/>
            <person name="Palmquist D."/>
            <person name="Wynhoven B."/>
            <person name="Kolosova N."/>
            <person name="Oddy C."/>
            <person name="Jancsik S."/>
            <person name="Douglas C.J."/>
            <person name="Liu J."/>
            <person name="Butterfield Y.S.N."/>
            <person name="Stott J."/>
            <person name="Yang G."/>
            <person name="Holt R.A."/>
            <person name="Siddiqui A."/>
            <person name="Jones S.J.M."/>
            <person name="Marra M.A."/>
            <person name="Ritland K."/>
            <person name="Bohlmann J."/>
        </authorList>
    </citation>
    <scope>NUCLEOTIDE SEQUENCE [LARGE SCALE MRNA]</scope>
    <source>
        <strain>cv. Nisqually</strain>
        <tissue>Leaf</tissue>
    </source>
</reference>
<sequence>MAETFLFTSESVNEGHPDKLCDQISDAVLDACLAQDPDSKVACETCTKTNMVMVFGEITTKADVDYEKIVRDTCRNIGFTSADVGLDADNCKVLVNIEQQSSDIAQGVHGHFSKRPEEIGAGDQGHMFGYATDETPELMPLSHVLATKLGARLTEVRKNGTCAWLRPDGKTQVTVEYYNENGAMVPIRVHTVLISTQHDETVTNDEIAADLKEHVIKPVIPEKYLDEKTIFHLNPSGRFVIGGPHGDAGLTGRKIIIDTYGGWGAHGGGAFSGKDPTKVDRSGAYIVRQAAKSIVASGLARRCIVQVSYAIGVPEPLSVFVDTYGTGKIPDKEILQIVKESFDFRPGMISINLDLKRGGNSRFLKTAAYGHFGRDDPDFTWEVVKPLKWDNKVQA</sequence>
<feature type="chain" id="PRO_0000363046" description="S-adenosylmethionine synthase 5">
    <location>
        <begin position="1"/>
        <end position="395"/>
    </location>
</feature>
<feature type="binding site" evidence="3">
    <location>
        <position position="10"/>
    </location>
    <ligand>
        <name>Mg(2+)</name>
        <dbReference type="ChEBI" id="CHEBI:18420"/>
    </ligand>
</feature>
<feature type="binding site" description="in other chain" evidence="4">
    <location>
        <position position="16"/>
    </location>
    <ligand>
        <name>ATP</name>
        <dbReference type="ChEBI" id="CHEBI:30616"/>
        <note>ligand shared between two neighboring subunits</note>
    </ligand>
</feature>
<feature type="binding site" evidence="2">
    <location>
        <position position="44"/>
    </location>
    <ligand>
        <name>K(+)</name>
        <dbReference type="ChEBI" id="CHEBI:29103"/>
    </ligand>
</feature>
<feature type="binding site" description="in other chain" evidence="2">
    <location>
        <position position="57"/>
    </location>
    <ligand>
        <name>L-methionine</name>
        <dbReference type="ChEBI" id="CHEBI:57844"/>
        <note>ligand shared between two neighboring subunits</note>
    </ligand>
</feature>
<feature type="binding site" description="in other chain" evidence="2">
    <location>
        <position position="100"/>
    </location>
    <ligand>
        <name>L-methionine</name>
        <dbReference type="ChEBI" id="CHEBI:57844"/>
        <note>ligand shared between two neighboring subunits</note>
    </ligand>
</feature>
<feature type="binding site" description="in other chain" evidence="4">
    <location>
        <begin position="168"/>
        <end position="170"/>
    </location>
    <ligand>
        <name>ATP</name>
        <dbReference type="ChEBI" id="CHEBI:30616"/>
        <note>ligand shared between two neighboring subunits</note>
    </ligand>
</feature>
<feature type="binding site" description="in other chain" evidence="4">
    <location>
        <begin position="236"/>
        <end position="239"/>
    </location>
    <ligand>
        <name>ATP</name>
        <dbReference type="ChEBI" id="CHEBI:30616"/>
        <note>ligand shared between two neighboring subunits</note>
    </ligand>
</feature>
<feature type="binding site" description="in other chain" evidence="4">
    <location>
        <position position="247"/>
    </location>
    <ligand>
        <name>ATP</name>
        <dbReference type="ChEBI" id="CHEBI:30616"/>
        <note>ligand shared between two neighboring subunits</note>
    </ligand>
</feature>
<feature type="binding site" evidence="2">
    <location>
        <position position="247"/>
    </location>
    <ligand>
        <name>L-methionine</name>
        <dbReference type="ChEBI" id="CHEBI:57844"/>
        <note>ligand shared between two neighboring subunits</note>
    </ligand>
</feature>
<feature type="binding site" description="in other chain" evidence="2">
    <location>
        <begin position="253"/>
        <end position="254"/>
    </location>
    <ligand>
        <name>ATP</name>
        <dbReference type="ChEBI" id="CHEBI:30616"/>
        <note>ligand shared between two neighboring subunits</note>
    </ligand>
</feature>
<feature type="binding site" evidence="2">
    <location>
        <position position="270"/>
    </location>
    <ligand>
        <name>ATP</name>
        <dbReference type="ChEBI" id="CHEBI:30616"/>
        <note>ligand shared between two neighboring subunits</note>
    </ligand>
</feature>
<feature type="binding site" evidence="2">
    <location>
        <position position="274"/>
    </location>
    <ligand>
        <name>ATP</name>
        <dbReference type="ChEBI" id="CHEBI:30616"/>
        <note>ligand shared between two neighboring subunits</note>
    </ligand>
</feature>
<feature type="binding site" evidence="3">
    <location>
        <position position="278"/>
    </location>
    <ligand>
        <name>ATP</name>
        <dbReference type="ChEBI" id="CHEBI:30616"/>
        <note>ligand shared between two neighboring subunits</note>
    </ligand>
</feature>
<feature type="binding site" description="in other chain" evidence="2">
    <location>
        <position position="278"/>
    </location>
    <ligand>
        <name>L-methionine</name>
        <dbReference type="ChEBI" id="CHEBI:57844"/>
        <note>ligand shared between two neighboring subunits</note>
    </ligand>
</feature>
<proteinExistence type="evidence at transcript level"/>
<evidence type="ECO:0000250" key="1"/>
<evidence type="ECO:0000250" key="2">
    <source>
        <dbReference type="UniProtKB" id="P0A817"/>
    </source>
</evidence>
<evidence type="ECO:0000250" key="3">
    <source>
        <dbReference type="UniProtKB" id="P13444"/>
    </source>
</evidence>
<evidence type="ECO:0000250" key="4">
    <source>
        <dbReference type="UniProtKB" id="Q00266"/>
    </source>
</evidence>
<evidence type="ECO:0000250" key="5">
    <source>
        <dbReference type="UniProtKB" id="Q96551"/>
    </source>
</evidence>
<evidence type="ECO:0000305" key="6"/>